<reference key="1">
    <citation type="journal article" date="2009" name="Genome Res.">
        <title>Comparative genomic analyses of the human fungal pathogens Coccidioides and their relatives.</title>
        <authorList>
            <person name="Sharpton T.J."/>
            <person name="Stajich J.E."/>
            <person name="Rounsley S.D."/>
            <person name="Gardner M.J."/>
            <person name="Wortman J.R."/>
            <person name="Jordar V.S."/>
            <person name="Maiti R."/>
            <person name="Kodira C.D."/>
            <person name="Neafsey D.E."/>
            <person name="Zeng Q."/>
            <person name="Hung C.-Y."/>
            <person name="McMahan C."/>
            <person name="Muszewska A."/>
            <person name="Grynberg M."/>
            <person name="Mandel M.A."/>
            <person name="Kellner E.M."/>
            <person name="Barker B.M."/>
            <person name="Galgiani J.N."/>
            <person name="Orbach M.J."/>
            <person name="Kirkland T.N."/>
            <person name="Cole G.T."/>
            <person name="Henn M.R."/>
            <person name="Birren B.W."/>
            <person name="Taylor J.W."/>
        </authorList>
    </citation>
    <scope>NUCLEOTIDE SEQUENCE [LARGE SCALE GENOMIC DNA]</scope>
    <source>
        <strain>NAm1 / WU24</strain>
    </source>
</reference>
<name>MCR1_AJECN</name>
<organism>
    <name type="scientific">Ajellomyces capsulatus (strain NAm1 / WU24)</name>
    <name type="common">Darling's disease fungus</name>
    <name type="synonym">Histoplasma capsulatum</name>
    <dbReference type="NCBI Taxonomy" id="2059318"/>
    <lineage>
        <taxon>Eukaryota</taxon>
        <taxon>Fungi</taxon>
        <taxon>Dikarya</taxon>
        <taxon>Ascomycota</taxon>
        <taxon>Pezizomycotina</taxon>
        <taxon>Eurotiomycetes</taxon>
        <taxon>Eurotiomycetidae</taxon>
        <taxon>Onygenales</taxon>
        <taxon>Ajellomycetaceae</taxon>
        <taxon>Histoplasma</taxon>
    </lineage>
</organism>
<gene>
    <name type="primary">MCR1</name>
    <name type="ORF">HCAG_03595</name>
</gene>
<protein>
    <recommendedName>
        <fullName>NADH-cytochrome b5 reductase 2</fullName>
        <ecNumber>1.6.2.2</ecNumber>
    </recommendedName>
    <alternativeName>
        <fullName>Mitochondrial cytochrome b reductase</fullName>
    </alternativeName>
</protein>
<keyword id="KW-0274">FAD</keyword>
<keyword id="KW-0285">Flavoprotein</keyword>
<keyword id="KW-0472">Membrane</keyword>
<keyword id="KW-0496">Mitochondrion</keyword>
<keyword id="KW-1000">Mitochondrion outer membrane</keyword>
<keyword id="KW-0520">NAD</keyword>
<keyword id="KW-0560">Oxidoreductase</keyword>
<keyword id="KW-1185">Reference proteome</keyword>
<keyword id="KW-0812">Transmembrane</keyword>
<keyword id="KW-1133">Transmembrane helix</keyword>
<sequence length="324" mass="36615">MFARYTFRCSQPLAQSVRKYSSEAPAKSSRIPLIGGITLAAGAGYYYYWQTTSAKSEPKERSTVFKGGDQGWIGLKLAHIDNVNHNVKKLRFEFEDPESVSGLHIASALLTKYKGLTDEKPTIRPYTPVSDEGMWASLGYLDLLVKRYPNGPMSNHLHNMAVGQRLDFKGPLPKYPWEPSKHDHICLIAGGTGITPMYQLVRKIFSNPEDKTKVTLVFANVTEEDILLRKEFEHLENTYPRRFRAFYTLDKPPKNWAQGTGFITKDLLKTVLPEPKTENIKIFVCGPPAMYKAISGQKVSPKDQGELSGILKELGYSKEQVYKF</sequence>
<evidence type="ECO:0000250" key="1"/>
<evidence type="ECO:0000255" key="2"/>
<evidence type="ECO:0000255" key="3">
    <source>
        <dbReference type="PROSITE-ProRule" id="PRU00716"/>
    </source>
</evidence>
<evidence type="ECO:0000305" key="4"/>
<accession>A6R1T7</accession>
<proteinExistence type="inferred from homology"/>
<dbReference type="EC" id="1.6.2.2"/>
<dbReference type="EMBL" id="CH476657">
    <property type="protein sequence ID" value="EDN07064.1"/>
    <property type="molecule type" value="Genomic_DNA"/>
</dbReference>
<dbReference type="SMR" id="A6R1T7"/>
<dbReference type="STRING" id="339724.A6R1T7"/>
<dbReference type="KEGG" id="aje:HCAG_03595"/>
<dbReference type="VEuPathDB" id="FungiDB:HCAG_03595"/>
<dbReference type="HOGENOM" id="CLU_003827_9_1_1"/>
<dbReference type="OMA" id="KGPEMQK"/>
<dbReference type="OrthoDB" id="1575at299071"/>
<dbReference type="Proteomes" id="UP000009297">
    <property type="component" value="Unassembled WGS sequence"/>
</dbReference>
<dbReference type="GO" id="GO:0005741">
    <property type="term" value="C:mitochondrial outer membrane"/>
    <property type="evidence" value="ECO:0007669"/>
    <property type="project" value="UniProtKB-SubCell"/>
</dbReference>
<dbReference type="GO" id="GO:0004128">
    <property type="term" value="F:cytochrome-b5 reductase activity, acting on NAD(P)H"/>
    <property type="evidence" value="ECO:0007669"/>
    <property type="project" value="UniProtKB-EC"/>
</dbReference>
<dbReference type="GO" id="GO:0006696">
    <property type="term" value="P:ergosterol biosynthetic process"/>
    <property type="evidence" value="ECO:0007669"/>
    <property type="project" value="TreeGrafter"/>
</dbReference>
<dbReference type="CDD" id="cd06183">
    <property type="entry name" value="cyt_b5_reduct_like"/>
    <property type="match status" value="1"/>
</dbReference>
<dbReference type="FunFam" id="2.40.30.10:FF:000032">
    <property type="entry name" value="NADH-cytochrome b5 reductase"/>
    <property type="match status" value="1"/>
</dbReference>
<dbReference type="FunFam" id="3.40.50.80:FF:000009">
    <property type="entry name" value="NADH-cytochrome b5 reductase"/>
    <property type="match status" value="1"/>
</dbReference>
<dbReference type="Gene3D" id="3.40.50.80">
    <property type="entry name" value="Nucleotide-binding domain of ferredoxin-NADP reductase (FNR) module"/>
    <property type="match status" value="1"/>
</dbReference>
<dbReference type="Gene3D" id="2.40.30.10">
    <property type="entry name" value="Translation factors"/>
    <property type="match status" value="1"/>
</dbReference>
<dbReference type="InterPro" id="IPR001834">
    <property type="entry name" value="CBR-like"/>
</dbReference>
<dbReference type="InterPro" id="IPR008333">
    <property type="entry name" value="Cbr1-like_FAD-bd_dom"/>
</dbReference>
<dbReference type="InterPro" id="IPR017927">
    <property type="entry name" value="FAD-bd_FR_type"/>
</dbReference>
<dbReference type="InterPro" id="IPR001709">
    <property type="entry name" value="Flavoprot_Pyr_Nucl_cyt_Rdtase"/>
</dbReference>
<dbReference type="InterPro" id="IPR039261">
    <property type="entry name" value="FNR_nucleotide-bd"/>
</dbReference>
<dbReference type="InterPro" id="IPR001433">
    <property type="entry name" value="OxRdtase_FAD/NAD-bd"/>
</dbReference>
<dbReference type="InterPro" id="IPR017938">
    <property type="entry name" value="Riboflavin_synthase-like_b-brl"/>
</dbReference>
<dbReference type="PANTHER" id="PTHR19370">
    <property type="entry name" value="NADH-CYTOCHROME B5 REDUCTASE"/>
    <property type="match status" value="1"/>
</dbReference>
<dbReference type="PANTHER" id="PTHR19370:SF171">
    <property type="entry name" value="NADH-CYTOCHROME B5 REDUCTASE 2"/>
    <property type="match status" value="1"/>
</dbReference>
<dbReference type="Pfam" id="PF00970">
    <property type="entry name" value="FAD_binding_6"/>
    <property type="match status" value="1"/>
</dbReference>
<dbReference type="Pfam" id="PF00175">
    <property type="entry name" value="NAD_binding_1"/>
    <property type="match status" value="1"/>
</dbReference>
<dbReference type="PRINTS" id="PR00406">
    <property type="entry name" value="CYTB5RDTASE"/>
</dbReference>
<dbReference type="PRINTS" id="PR00371">
    <property type="entry name" value="FPNCR"/>
</dbReference>
<dbReference type="SUPFAM" id="SSF52343">
    <property type="entry name" value="Ferredoxin reductase-like, C-terminal NADP-linked domain"/>
    <property type="match status" value="1"/>
</dbReference>
<dbReference type="SUPFAM" id="SSF63380">
    <property type="entry name" value="Riboflavin synthase domain-like"/>
    <property type="match status" value="1"/>
</dbReference>
<dbReference type="PROSITE" id="PS51384">
    <property type="entry name" value="FAD_FR"/>
    <property type="match status" value="1"/>
</dbReference>
<feature type="chain" id="PRO_0000330168" description="NADH-cytochrome b5 reductase 2">
    <location>
        <begin position="1"/>
        <end position="324"/>
    </location>
</feature>
<feature type="transmembrane region" description="Helical" evidence="2">
    <location>
        <begin position="31"/>
        <end position="47"/>
    </location>
</feature>
<feature type="domain" description="FAD-binding FR-type" evidence="3">
    <location>
        <begin position="70"/>
        <end position="178"/>
    </location>
</feature>
<feature type="binding site" evidence="1">
    <location>
        <begin position="181"/>
        <end position="216"/>
    </location>
    <ligand>
        <name>FAD</name>
        <dbReference type="ChEBI" id="CHEBI:57692"/>
    </ligand>
</feature>
<comment type="function">
    <text evidence="1">May mediate the reduction of outer membrane cytochrome b5.</text>
</comment>
<comment type="catalytic activity">
    <reaction>
        <text>2 Fe(III)-[cytochrome b5] + NADH = 2 Fe(II)-[cytochrome b5] + NAD(+) + H(+)</text>
        <dbReference type="Rhea" id="RHEA:46680"/>
        <dbReference type="Rhea" id="RHEA-COMP:10438"/>
        <dbReference type="Rhea" id="RHEA-COMP:10439"/>
        <dbReference type="ChEBI" id="CHEBI:15378"/>
        <dbReference type="ChEBI" id="CHEBI:29033"/>
        <dbReference type="ChEBI" id="CHEBI:29034"/>
        <dbReference type="ChEBI" id="CHEBI:57540"/>
        <dbReference type="ChEBI" id="CHEBI:57945"/>
        <dbReference type="EC" id="1.6.2.2"/>
    </reaction>
</comment>
<comment type="cofactor">
    <cofactor evidence="1">
        <name>FAD</name>
        <dbReference type="ChEBI" id="CHEBI:57692"/>
    </cofactor>
</comment>
<comment type="subcellular location">
    <subcellularLocation>
        <location evidence="1">Mitochondrion outer membrane</location>
        <topology evidence="1">Single-pass membrane protein</topology>
    </subcellularLocation>
</comment>
<comment type="similarity">
    <text evidence="4">Belongs to the flavoprotein pyridine nucleotide cytochrome reductase family.</text>
</comment>